<accession>Q35630</accession>
<evidence type="ECO:0000250" key="1"/>
<evidence type="ECO:0000250" key="2">
    <source>
        <dbReference type="UniProtKB" id="P00157"/>
    </source>
</evidence>
<evidence type="ECO:0000255" key="3">
    <source>
        <dbReference type="PROSITE-ProRule" id="PRU00967"/>
    </source>
</evidence>
<evidence type="ECO:0000255" key="4">
    <source>
        <dbReference type="PROSITE-ProRule" id="PRU00968"/>
    </source>
</evidence>
<geneLocation type="mitochondrion"/>
<protein>
    <recommendedName>
        <fullName>Cytochrome b</fullName>
    </recommendedName>
    <alternativeName>
        <fullName>Complex III subunit 3</fullName>
    </alternativeName>
    <alternativeName>
        <fullName>Complex III subunit III</fullName>
    </alternativeName>
    <alternativeName>
        <fullName>Cytochrome b-c1 complex subunit 3</fullName>
    </alternativeName>
    <alternativeName>
        <fullName>Ubiquinol-cytochrome-c reductase complex cytochrome b subunit</fullName>
    </alternativeName>
</protein>
<keyword id="KW-0249">Electron transport</keyword>
<keyword id="KW-0349">Heme</keyword>
<keyword id="KW-0408">Iron</keyword>
<keyword id="KW-0472">Membrane</keyword>
<keyword id="KW-0479">Metal-binding</keyword>
<keyword id="KW-0496">Mitochondrion</keyword>
<keyword id="KW-0999">Mitochondrion inner membrane</keyword>
<keyword id="KW-0679">Respiratory chain</keyword>
<keyword id="KW-0812">Transmembrane</keyword>
<keyword id="KW-1133">Transmembrane helix</keyword>
<keyword id="KW-0813">Transport</keyword>
<keyword id="KW-0830">Ubiquinone</keyword>
<dbReference type="EMBL" id="U35414">
    <property type="protein sequence ID" value="AAC52549.1"/>
    <property type="molecule type" value="Genomic_DNA"/>
</dbReference>
<dbReference type="GO" id="GO:0005743">
    <property type="term" value="C:mitochondrial inner membrane"/>
    <property type="evidence" value="ECO:0007669"/>
    <property type="project" value="UniProtKB-SubCell"/>
</dbReference>
<dbReference type="GO" id="GO:0045275">
    <property type="term" value="C:respiratory chain complex III"/>
    <property type="evidence" value="ECO:0007669"/>
    <property type="project" value="InterPro"/>
</dbReference>
<dbReference type="GO" id="GO:0046872">
    <property type="term" value="F:metal ion binding"/>
    <property type="evidence" value="ECO:0007669"/>
    <property type="project" value="UniProtKB-KW"/>
</dbReference>
<dbReference type="GO" id="GO:0008121">
    <property type="term" value="F:ubiquinol-cytochrome-c reductase activity"/>
    <property type="evidence" value="ECO:0007669"/>
    <property type="project" value="InterPro"/>
</dbReference>
<dbReference type="GO" id="GO:0006122">
    <property type="term" value="P:mitochondrial electron transport, ubiquinol to cytochrome c"/>
    <property type="evidence" value="ECO:0007669"/>
    <property type="project" value="TreeGrafter"/>
</dbReference>
<dbReference type="CDD" id="cd00290">
    <property type="entry name" value="cytochrome_b_C"/>
    <property type="match status" value="1"/>
</dbReference>
<dbReference type="CDD" id="cd00284">
    <property type="entry name" value="Cytochrome_b_N"/>
    <property type="match status" value="1"/>
</dbReference>
<dbReference type="FunFam" id="1.20.810.10:FF:000002">
    <property type="entry name" value="Cytochrome b"/>
    <property type="match status" value="1"/>
</dbReference>
<dbReference type="Gene3D" id="1.20.810.10">
    <property type="entry name" value="Cytochrome Bc1 Complex, Chain C"/>
    <property type="match status" value="1"/>
</dbReference>
<dbReference type="InterPro" id="IPR005798">
    <property type="entry name" value="Cyt_b/b6_C"/>
</dbReference>
<dbReference type="InterPro" id="IPR036150">
    <property type="entry name" value="Cyt_b/b6_C_sf"/>
</dbReference>
<dbReference type="InterPro" id="IPR005797">
    <property type="entry name" value="Cyt_b/b6_N"/>
</dbReference>
<dbReference type="InterPro" id="IPR027387">
    <property type="entry name" value="Cytb/b6-like_sf"/>
</dbReference>
<dbReference type="InterPro" id="IPR030689">
    <property type="entry name" value="Cytochrome_b"/>
</dbReference>
<dbReference type="InterPro" id="IPR048260">
    <property type="entry name" value="Cytochrome_b_C_euk/bac"/>
</dbReference>
<dbReference type="InterPro" id="IPR048259">
    <property type="entry name" value="Cytochrome_b_N_euk/bac"/>
</dbReference>
<dbReference type="InterPro" id="IPR016174">
    <property type="entry name" value="Di-haem_cyt_TM"/>
</dbReference>
<dbReference type="PANTHER" id="PTHR19271">
    <property type="entry name" value="CYTOCHROME B"/>
    <property type="match status" value="1"/>
</dbReference>
<dbReference type="PANTHER" id="PTHR19271:SF16">
    <property type="entry name" value="CYTOCHROME B"/>
    <property type="match status" value="1"/>
</dbReference>
<dbReference type="Pfam" id="PF00032">
    <property type="entry name" value="Cytochrom_B_C"/>
    <property type="match status" value="1"/>
</dbReference>
<dbReference type="Pfam" id="PF00033">
    <property type="entry name" value="Cytochrome_B"/>
    <property type="match status" value="1"/>
</dbReference>
<dbReference type="PIRSF" id="PIRSF038885">
    <property type="entry name" value="COB"/>
    <property type="match status" value="1"/>
</dbReference>
<dbReference type="SUPFAM" id="SSF81648">
    <property type="entry name" value="a domain/subunit of cytochrome bc1 complex (Ubiquinol-cytochrome c reductase)"/>
    <property type="match status" value="1"/>
</dbReference>
<dbReference type="SUPFAM" id="SSF81342">
    <property type="entry name" value="Transmembrane di-heme cytochromes"/>
    <property type="match status" value="1"/>
</dbReference>
<dbReference type="PROSITE" id="PS51003">
    <property type="entry name" value="CYTB_CTER"/>
    <property type="match status" value="1"/>
</dbReference>
<dbReference type="PROSITE" id="PS51002">
    <property type="entry name" value="CYTB_NTER"/>
    <property type="match status" value="1"/>
</dbReference>
<comment type="function">
    <text evidence="2">Component of the ubiquinol-cytochrome c reductase complex (complex III or cytochrome b-c1 complex) that is part of the mitochondrial respiratory chain. The b-c1 complex mediates electron transfer from ubiquinol to cytochrome c. Contributes to the generation of a proton gradient across the mitochondrial membrane that is then used for ATP synthesis.</text>
</comment>
<comment type="cofactor">
    <cofactor evidence="2">
        <name>heme b</name>
        <dbReference type="ChEBI" id="CHEBI:60344"/>
    </cofactor>
    <text evidence="2">Binds 2 heme b groups non-covalently.</text>
</comment>
<comment type="subunit">
    <text evidence="2">The cytochrome bc1 complex contains 11 subunits: 3 respiratory subunits (MT-CYB, CYC1 and UQCRFS1), 2 core proteins (UQCRC1 and UQCRC2) and 6 low-molecular weight proteins (UQCRH/QCR6, UQCRB/QCR7, UQCRQ/QCR8, UQCR10/QCR9, UQCR11/QCR10 and a cleavage product of UQCRFS1). This cytochrome bc1 complex then forms a dimer.</text>
</comment>
<comment type="subcellular location">
    <subcellularLocation>
        <location evidence="2">Mitochondrion inner membrane</location>
        <topology evidence="2">Multi-pass membrane protein</topology>
    </subcellularLocation>
</comment>
<comment type="miscellaneous">
    <text evidence="1">Heme 1 (or BL or b562) is low-potential and absorbs at about 562 nm, and heme 2 (or BH or b566) is high-potential and absorbs at about 566 nm.</text>
</comment>
<comment type="similarity">
    <text evidence="3 4">Belongs to the cytochrome b family.</text>
</comment>
<comment type="caution">
    <text evidence="2">The full-length protein contains only eight transmembrane helices, not nine as predicted by bioinformatics tools.</text>
</comment>
<organism>
    <name type="scientific">Proechimys simonsi</name>
    <name type="common">Simon's spiny rat</name>
    <name type="synonym">Proechimys hendeei</name>
    <dbReference type="NCBI Taxonomy" id="42834"/>
    <lineage>
        <taxon>Eukaryota</taxon>
        <taxon>Metazoa</taxon>
        <taxon>Chordata</taxon>
        <taxon>Craniata</taxon>
        <taxon>Vertebrata</taxon>
        <taxon>Euteleostomi</taxon>
        <taxon>Mammalia</taxon>
        <taxon>Eutheria</taxon>
        <taxon>Euarchontoglires</taxon>
        <taxon>Glires</taxon>
        <taxon>Rodentia</taxon>
        <taxon>Hystricomorpha</taxon>
        <taxon>Echimyidae</taxon>
        <taxon>Proechimys</taxon>
    </lineage>
</organism>
<sequence>MXNVRKSHPLIKIINHSFIDLPTPSNISAWWNFGSLLGVCLVIQIITGLFLAMHYTADTTTAFSSVAHICRDVNYGWLIRYAHANGASMFFIFLYFHIGRGLYYGSYTFMETWNVGVILLFAVMATAFMGYVLPWGQMSFWGATVITNLLSAIPYIGPTLVEWIWGGFSVDKATLTRFFAFHFVLPFIITAMVMIHLLFLHETGSNNPSGLNSNSDXIPFHPYYTIKDILGLLFMLLSLTMLILFSPDLLGDPDNYTPANPLNTPPHIKPEWYFLFAYAILRSIPNKLGGVLALVFSILILMLFPVLHMSKQRSMTFRPISQCLLWILTANLVILTWIGGQPVEYPFITIGQLASISYFCIILILMPTTGFMENKLLKW</sequence>
<feature type="chain" id="PRO_0000255123" description="Cytochrome b">
    <location>
        <begin position="1"/>
        <end position="379"/>
    </location>
</feature>
<feature type="transmembrane region" description="Helical" evidence="2">
    <location>
        <begin position="33"/>
        <end position="53"/>
    </location>
</feature>
<feature type="transmembrane region" description="Helical" evidence="2">
    <location>
        <begin position="77"/>
        <end position="98"/>
    </location>
</feature>
<feature type="transmembrane region" description="Helical" evidence="2">
    <location>
        <begin position="113"/>
        <end position="133"/>
    </location>
</feature>
<feature type="transmembrane region" description="Helical" evidence="2">
    <location>
        <begin position="178"/>
        <end position="198"/>
    </location>
</feature>
<feature type="transmembrane region" description="Helical" evidence="2">
    <location>
        <begin position="226"/>
        <end position="246"/>
    </location>
</feature>
<feature type="transmembrane region" description="Helical" evidence="2">
    <location>
        <begin position="288"/>
        <end position="308"/>
    </location>
</feature>
<feature type="transmembrane region" description="Helical" evidence="2">
    <location>
        <begin position="320"/>
        <end position="340"/>
    </location>
</feature>
<feature type="transmembrane region" description="Helical" evidence="2">
    <location>
        <begin position="347"/>
        <end position="367"/>
    </location>
</feature>
<feature type="binding site" description="axial binding residue" evidence="2">
    <location>
        <position position="83"/>
    </location>
    <ligand>
        <name>heme b</name>
        <dbReference type="ChEBI" id="CHEBI:60344"/>
        <label>b562</label>
    </ligand>
    <ligandPart>
        <name>Fe</name>
        <dbReference type="ChEBI" id="CHEBI:18248"/>
    </ligandPart>
</feature>
<feature type="binding site" description="axial binding residue" evidence="2">
    <location>
        <position position="97"/>
    </location>
    <ligand>
        <name>heme b</name>
        <dbReference type="ChEBI" id="CHEBI:60344"/>
        <label>b566</label>
    </ligand>
    <ligandPart>
        <name>Fe</name>
        <dbReference type="ChEBI" id="CHEBI:18248"/>
    </ligandPart>
</feature>
<feature type="binding site" description="axial binding residue" evidence="2">
    <location>
        <position position="182"/>
    </location>
    <ligand>
        <name>heme b</name>
        <dbReference type="ChEBI" id="CHEBI:60344"/>
        <label>b562</label>
    </ligand>
    <ligandPart>
        <name>Fe</name>
        <dbReference type="ChEBI" id="CHEBI:18248"/>
    </ligandPart>
</feature>
<feature type="binding site" description="axial binding residue" evidence="2">
    <location>
        <position position="196"/>
    </location>
    <ligand>
        <name>heme b</name>
        <dbReference type="ChEBI" id="CHEBI:60344"/>
        <label>b566</label>
    </ligand>
    <ligandPart>
        <name>Fe</name>
        <dbReference type="ChEBI" id="CHEBI:18248"/>
    </ligandPart>
</feature>
<feature type="binding site" evidence="2">
    <location>
        <position position="201"/>
    </location>
    <ligand>
        <name>a ubiquinone</name>
        <dbReference type="ChEBI" id="CHEBI:16389"/>
    </ligand>
</feature>
<gene>
    <name type="primary">MT-CYB</name>
    <name type="synonym">COB</name>
    <name type="synonym">CYTB</name>
    <name type="synonym">MTCYB</name>
</gene>
<reference key="1">
    <citation type="journal article" date="1996" name="Mol. Phylogenet. Evol.">
        <title>The simultaneous diversification of South American echimyid rodents (Hystricognathi) based on complete cytochrome b sequences.</title>
        <authorList>
            <person name="Lara M.C."/>
            <person name="Patton J.L."/>
            <person name="da Silva M.N.F."/>
        </authorList>
    </citation>
    <scope>NUCLEOTIDE SEQUENCE [GENOMIC DNA]</scope>
</reference>
<proteinExistence type="inferred from homology"/>
<name>CYB_PROSI</name>